<proteinExistence type="evidence at protein level"/>
<keyword id="KW-0002">3D-structure</keyword>
<keyword id="KW-0903">Direct protein sequencing</keyword>
<keyword id="KW-1015">Disulfide bond</keyword>
<keyword id="KW-1199">Hemostasis impairing toxin</keyword>
<keyword id="KW-1201">Platelet aggregation inhibiting toxin</keyword>
<keyword id="KW-0964">Secreted</keyword>
<keyword id="KW-0800">Toxin</keyword>
<protein>
    <recommendedName>
        <fullName>Snaclec rhodocetin subunit beta</fullName>
    </recommendedName>
</protein>
<sequence>DFRCPTTWSASKLYCYKPFKEKKTWIEAERFCAKQAENGHLVSIGSAAEADFLDLVIVVNFDKQRYRAWTGLTERNLKWTNGASVSYENLYEPYIRKCFVVQPWEGKSKWYKADCEEKNAFLCKFPKPH</sequence>
<name>SLEB_CALRH</name>
<comment type="function">
    <text evidence="2 3 5">Potent inhibitor of collagen-induced platelet aggregation. It acts by binding to the integrin alpha2A domain and blocks collagen binding to integrin alpha-2/beta-1 (ITGA2/ITGB1). The gamma/delta subunits mainly contribute to this activity.</text>
</comment>
<comment type="subunit">
    <text evidence="3 6 7">Heterotetramer of subunit alpha, beta, gamma and delta; only the gamma and the delta subunits are disulfide-linked. Alpha-beta heterodimer and gamma-delta heterodimer associate orthogonally, giving a cruciform conformation (PubMed:19369383). This heterotetramer may covalently dimerizes thanks to the gamma subunit (PubMed:11121411).</text>
</comment>
<comment type="subcellular location">
    <subcellularLocation>
        <location>Secreted</location>
    </subcellularLocation>
</comment>
<comment type="tissue specificity">
    <text>Expressed by the venom gland.</text>
</comment>
<comment type="mass spectrometry"/>
<comment type="similarity">
    <text evidence="8">Belongs to the snaclec family.</text>
</comment>
<organism>
    <name type="scientific">Calloselasma rhodostoma</name>
    <name type="common">Malayan pit viper</name>
    <name type="synonym">Agkistrodon rhodostoma</name>
    <dbReference type="NCBI Taxonomy" id="8717"/>
    <lineage>
        <taxon>Eukaryota</taxon>
        <taxon>Metazoa</taxon>
        <taxon>Chordata</taxon>
        <taxon>Craniata</taxon>
        <taxon>Vertebrata</taxon>
        <taxon>Euteleostomi</taxon>
        <taxon>Lepidosauria</taxon>
        <taxon>Squamata</taxon>
        <taxon>Bifurcata</taxon>
        <taxon>Unidentata</taxon>
        <taxon>Episquamata</taxon>
        <taxon>Toxicofera</taxon>
        <taxon>Serpentes</taxon>
        <taxon>Colubroidea</taxon>
        <taxon>Viperidae</taxon>
        <taxon>Crotalinae</taxon>
        <taxon>Calloselasma</taxon>
    </lineage>
</organism>
<dbReference type="PDB" id="1SB2">
    <property type="method" value="X-ray"/>
    <property type="resolution" value="1.90 A"/>
    <property type="chains" value="B=1-129"/>
</dbReference>
<dbReference type="PDB" id="3GPR">
    <property type="method" value="X-ray"/>
    <property type="resolution" value="3.20 A"/>
    <property type="chains" value="B=1-129"/>
</dbReference>
<dbReference type="PDBsum" id="1SB2"/>
<dbReference type="PDBsum" id="3GPR"/>
<dbReference type="SMR" id="P81398"/>
<dbReference type="EvolutionaryTrace" id="P81398"/>
<dbReference type="GO" id="GO:0005576">
    <property type="term" value="C:extracellular region"/>
    <property type="evidence" value="ECO:0007669"/>
    <property type="project" value="UniProtKB-SubCell"/>
</dbReference>
<dbReference type="GO" id="GO:0090729">
    <property type="term" value="F:toxin activity"/>
    <property type="evidence" value="ECO:0007669"/>
    <property type="project" value="UniProtKB-KW"/>
</dbReference>
<dbReference type="FunFam" id="3.10.100.10:FF:000087">
    <property type="entry name" value="Snaclec rhodocetin subunit delta"/>
    <property type="match status" value="1"/>
</dbReference>
<dbReference type="Gene3D" id="3.10.100.10">
    <property type="entry name" value="Mannose-Binding Protein A, subunit A"/>
    <property type="match status" value="1"/>
</dbReference>
<dbReference type="InterPro" id="IPR001304">
    <property type="entry name" value="C-type_lectin-like"/>
</dbReference>
<dbReference type="InterPro" id="IPR016186">
    <property type="entry name" value="C-type_lectin-like/link_sf"/>
</dbReference>
<dbReference type="InterPro" id="IPR050111">
    <property type="entry name" value="C-type_lectin/snaclec_domain"/>
</dbReference>
<dbReference type="InterPro" id="IPR016187">
    <property type="entry name" value="CTDL_fold"/>
</dbReference>
<dbReference type="PANTHER" id="PTHR22803">
    <property type="entry name" value="MANNOSE, PHOSPHOLIPASE, LECTIN RECEPTOR RELATED"/>
    <property type="match status" value="1"/>
</dbReference>
<dbReference type="Pfam" id="PF00059">
    <property type="entry name" value="Lectin_C"/>
    <property type="match status" value="1"/>
</dbReference>
<dbReference type="SMART" id="SM00034">
    <property type="entry name" value="CLECT"/>
    <property type="match status" value="1"/>
</dbReference>
<dbReference type="SUPFAM" id="SSF56436">
    <property type="entry name" value="C-type lectin-like"/>
    <property type="match status" value="1"/>
</dbReference>
<dbReference type="PROSITE" id="PS50041">
    <property type="entry name" value="C_TYPE_LECTIN_2"/>
    <property type="match status" value="1"/>
</dbReference>
<accession>P81398</accession>
<evidence type="ECO:0000255" key="1">
    <source>
        <dbReference type="PROSITE-ProRule" id="PRU00040"/>
    </source>
</evidence>
<evidence type="ECO:0000269" key="2">
    <source>
    </source>
</evidence>
<evidence type="ECO:0000269" key="3">
    <source>
    </source>
</evidence>
<evidence type="ECO:0000269" key="4">
    <source>
    </source>
</evidence>
<evidence type="ECO:0000269" key="5">
    <source>
    </source>
</evidence>
<evidence type="ECO:0000269" key="6">
    <source>
    </source>
</evidence>
<evidence type="ECO:0000269" key="7">
    <source>
    </source>
</evidence>
<evidence type="ECO:0000305" key="8"/>
<evidence type="ECO:0007829" key="9">
    <source>
        <dbReference type="PDB" id="1SB2"/>
    </source>
</evidence>
<evidence type="ECO:0007829" key="10">
    <source>
        <dbReference type="PDB" id="3GPR"/>
    </source>
</evidence>
<reference key="1">
    <citation type="journal article" date="1999" name="Biochemistry">
        <title>Rhodocetin, a novel platelet aggregation inhibitor from the venom of Calloselasma rhodostoma (Malayan pit viper): synergistic and noncovalent interaction between its subunits.</title>
        <authorList>
            <person name="Wang R."/>
            <person name="Kini R.M."/>
            <person name="Chung M.C.M."/>
        </authorList>
    </citation>
    <scope>PROTEIN SEQUENCE</scope>
    <scope>FUNCTION</scope>
    <scope>MASS SPECTROMETRY</scope>
    <source>
        <tissue>Venom</tissue>
    </source>
</reference>
<reference key="2">
    <citation type="journal article" date="2009" name="FASEB J.">
        <title>The alpha2beta1 integrin-specific antagonist rhodocetin is a cruciform, heterotetrameric molecule.</title>
        <authorList>
            <person name="Eble J.A."/>
            <person name="Niland S."/>
            <person name="Bracht T."/>
            <person name="Mormann M."/>
            <person name="Peter-Katalinic J."/>
            <person name="Pohlentz G."/>
            <person name="Stetefeld J."/>
        </authorList>
    </citation>
    <scope>PARTIAL PROTEIN SEQUENCE</scope>
    <scope>SUBUNIT</scope>
    <scope>DISULFIDE BONDS</scope>
    <scope>X-RAY CRYSTALLOGRAPHY (3.2 ANGSTROMS) OF HETEROTETRAMER</scope>
    <scope>IDENTIFICATION BY MASS SPECTROMETRY</scope>
    <source>
        <tissue>Venom</tissue>
    </source>
</reference>
<reference key="3">
    <citation type="journal article" date="2001" name="J. Protein Chem.">
        <title>Purification and characterization of a variant of rhodocetin from Calloselasma rhodostoma (Malayan pit viper) venom.</title>
        <authorList>
            <person name="Kong C."/>
            <person name="Chung M.C."/>
        </authorList>
    </citation>
    <scope>PARTIAL PROTEIN SEQUENCE</scope>
    <scope>VARIANT ASP-88</scope>
</reference>
<reference key="4">
    <citation type="journal article" date="2001" name="J. Biol. Chem.">
        <title>alpha 2beta 1 integrin is not recognized by rhodocytin but is the specific, high affinity target of rhodocetin, an RGD-independent disintegrin and potent inhibitor of cell adhesion to collagen.</title>
        <authorList>
            <person name="Eble J.A."/>
            <person name="Beermann B."/>
            <person name="Hinz H.J."/>
            <person name="Schmidt-Hederich A."/>
        </authorList>
    </citation>
    <scope>PROTEIN SEQUENCE OF 1-20</scope>
    <scope>FUNCTION</scope>
</reference>
<reference key="5">
    <citation type="journal article" date="2003" name="Biochem. J.">
        <title>The alpha2beta1 integrin inhibitor rhodocetin binds to the A-domain of the integrin alpha2 subunit proximal to the collagen-binding site.</title>
        <authorList>
            <person name="Eble J.A."/>
            <person name="Tuckwell D.S."/>
        </authorList>
    </citation>
    <scope>FUNCTION</scope>
</reference>
<reference key="6">
    <citation type="journal article" date="2005" name="Protein Sci.">
        <title>Structure of rhodocetin reveals noncovalently bound heterodimer interface.</title>
        <authorList>
            <person name="Paaventhan P."/>
            <person name="Kong C."/>
            <person name="Joseph J.S."/>
            <person name="Chung M.C."/>
            <person name="Kolatkar P.R."/>
        </authorList>
    </citation>
    <scope>X-RAY CRYSTALLOGRAPHY (1.9 ANGSTROMS) IN COMPLEX WITH RHCA</scope>
    <scope>DISULFIDE BONDS</scope>
</reference>
<feature type="chain" id="PRO_0000046707" description="Snaclec rhodocetin subunit beta">
    <location>
        <begin position="1"/>
        <end position="129"/>
    </location>
</feature>
<feature type="domain" description="C-type lectin" evidence="1">
    <location>
        <begin position="3"/>
        <end position="125"/>
    </location>
</feature>
<feature type="disulfide bond">
    <location>
        <begin position="4"/>
        <end position="15"/>
    </location>
</feature>
<feature type="disulfide bond">
    <location>
        <begin position="32"/>
        <end position="123"/>
    </location>
</feature>
<feature type="disulfide bond">
    <location>
        <begin position="98"/>
        <end position="115"/>
    </location>
</feature>
<feature type="sequence variant" evidence="4">
    <original>E</original>
    <variation>D</variation>
    <location>
        <position position="88"/>
    </location>
</feature>
<feature type="strand" evidence="9">
    <location>
        <begin position="12"/>
        <end position="23"/>
    </location>
</feature>
<feature type="helix" evidence="9">
    <location>
        <begin position="25"/>
        <end position="35"/>
    </location>
</feature>
<feature type="helix" evidence="9">
    <location>
        <begin position="47"/>
        <end position="60"/>
    </location>
</feature>
<feature type="strand" evidence="9">
    <location>
        <begin position="68"/>
        <end position="74"/>
    </location>
</feature>
<feature type="strand" evidence="10">
    <location>
        <begin position="80"/>
        <end position="82"/>
    </location>
</feature>
<feature type="strand" evidence="9">
    <location>
        <begin position="90"/>
        <end position="92"/>
    </location>
</feature>
<feature type="strand" evidence="9">
    <location>
        <begin position="98"/>
        <end position="104"/>
    </location>
</feature>
<feature type="strand" evidence="9">
    <location>
        <begin position="107"/>
        <end position="113"/>
    </location>
</feature>
<feature type="strand" evidence="9">
    <location>
        <begin position="119"/>
        <end position="126"/>
    </location>
</feature>